<comment type="function">
    <text>Could be a protease inhibitor. May play an important role in mammary gland development and tissue remodeling.</text>
</comment>
<comment type="subcellular location">
    <subcellularLocation>
        <location>Secreted</location>
    </subcellularLocation>
</comment>
<comment type="tissue specificity">
    <text>Milk-specific; major protein component of milk whey.</text>
</comment>
<proteinExistence type="evidence at protein level"/>
<organism>
    <name type="scientific">Sus scrofa</name>
    <name type="common">Pig</name>
    <dbReference type="NCBI Taxonomy" id="9823"/>
    <lineage>
        <taxon>Eukaryota</taxon>
        <taxon>Metazoa</taxon>
        <taxon>Chordata</taxon>
        <taxon>Craniata</taxon>
        <taxon>Vertebrata</taxon>
        <taxon>Euteleostomi</taxon>
        <taxon>Mammalia</taxon>
        <taxon>Eutheria</taxon>
        <taxon>Laurasiatheria</taxon>
        <taxon>Artiodactyla</taxon>
        <taxon>Suina</taxon>
        <taxon>Suidae</taxon>
        <taxon>Sus</taxon>
    </lineage>
</organism>
<evidence type="ECO:0000255" key="1">
    <source>
        <dbReference type="PROSITE-ProRule" id="PRU00722"/>
    </source>
</evidence>
<evidence type="ECO:0000269" key="2">
    <source>
    </source>
</evidence>
<evidence type="ECO:0000269" key="3">
    <source>
    </source>
</evidence>
<evidence type="ECO:0000305" key="4"/>
<sequence length="132" mass="13956">MRFLTSLALALIALEAALALAPALNLPGLATCPELSSSSEDPCVISCVNDESCPQGTKCCARSPCSRSCTVPLLVPVPKAGRCPWVPAPLAPELCLEKNECSRDDQCRGNKKCCFSSCAMRCLDPDTEAPLQ</sequence>
<gene>
    <name type="primary">WAP</name>
</gene>
<name>WAP_PIG</name>
<reference key="1">
    <citation type="journal article" date="1998" name="J. Mol. Endocrinol.">
        <title>Molecular characterisation and hormone-dependent expression of the porcine whey acidic protein gene.</title>
        <authorList>
            <person name="Simpson K.J."/>
            <person name="Bird P."/>
            <person name="Shaw D."/>
            <person name="Nicholas K.R."/>
        </authorList>
    </citation>
    <scope>NUCLEOTIDE SEQUENCE [MRNA]</scope>
    <scope>PROTEIN SEQUENCE OF 20-56 AND 93-132</scope>
</reference>
<reference key="2">
    <citation type="journal article" date="2001" name="Gene">
        <title>Cloning, transcription and chromosomal localization of the porcine whey acidic protein gene and its expression in HC11 cell line.</title>
        <authorList>
            <person name="Rival S."/>
            <person name="Attal J."/>
            <person name="Delville-Giraud C."/>
            <person name="Yerle M."/>
            <person name="Laffont P."/>
            <person name="Rogel-Gaillard C."/>
            <person name="Houdebine L.-M."/>
        </authorList>
    </citation>
    <scope>NUCLEOTIDE SEQUENCE [GENOMIC DNA]</scope>
</reference>
<reference key="3">
    <citation type="submission" date="1997-11" db="EMBL/GenBank/DDBJ databases">
        <title>Cloning and characterisation of the porcine whey acidic protein.</title>
        <authorList>
            <person name="Masel A.M."/>
            <person name="Hall A."/>
            <person name="Bell K.T."/>
        </authorList>
    </citation>
    <scope>NUCLEOTIDE SEQUENCE [MRNA] OF 17-132</scope>
    <source>
        <tissue>Mammary gland</tissue>
    </source>
</reference>
<reference key="4">
    <citation type="journal article" date="1999" name="J. Mol. Graph. Model.">
        <title>The whey acidic protein family: a new signature motif and three-dimensional structure by comparative modeling.</title>
        <authorList>
            <person name="Ranganathan S."/>
            <person name="Simpson K.J."/>
            <person name="Shaw D.C."/>
            <person name="Nicholas K.R."/>
        </authorList>
    </citation>
    <scope>3D-STRUCTURE MODELING OF 20-132</scope>
    <scope>DISULFIDE BONDS</scope>
</reference>
<keyword id="KW-0903">Direct protein sequencing</keyword>
<keyword id="KW-1015">Disulfide bond</keyword>
<keyword id="KW-0494">Milk protein</keyword>
<keyword id="KW-0646">Protease inhibitor</keyword>
<keyword id="KW-1185">Reference proteome</keyword>
<keyword id="KW-0677">Repeat</keyword>
<keyword id="KW-0964">Secreted</keyword>
<keyword id="KW-0732">Signal</keyword>
<dbReference type="EMBL" id="AJ000221">
    <property type="protein sequence ID" value="CAA03950.1"/>
    <property type="molecule type" value="mRNA"/>
</dbReference>
<dbReference type="EMBL" id="AF320306">
    <property type="protein sequence ID" value="AAK52450.1"/>
    <property type="molecule type" value="Genomic_DNA"/>
</dbReference>
<dbReference type="EMBL" id="AF034646">
    <property type="protein sequence ID" value="AAC72878.1"/>
    <property type="molecule type" value="mRNA"/>
</dbReference>
<dbReference type="RefSeq" id="NP_999006.1">
    <property type="nucleotide sequence ID" value="NM_213841.2"/>
</dbReference>
<dbReference type="SMR" id="O46655"/>
<dbReference type="FunCoup" id="O46655">
    <property type="interactions" value="43"/>
</dbReference>
<dbReference type="STRING" id="9823.ENSSSCP00000017721"/>
<dbReference type="MEROPS" id="I17.001"/>
<dbReference type="PaxDb" id="9823-ENSSSCP00000017721"/>
<dbReference type="PeptideAtlas" id="O46655"/>
<dbReference type="Ensembl" id="ENSSSCT00000018212.5">
    <property type="protein sequence ID" value="ENSSSCP00000017721.2"/>
    <property type="gene ID" value="ENSSSCG00000016731.5"/>
</dbReference>
<dbReference type="Ensembl" id="ENSSSCT00015003203.1">
    <property type="protein sequence ID" value="ENSSSCP00015001061.1"/>
    <property type="gene ID" value="ENSSSCG00015002600.1"/>
</dbReference>
<dbReference type="Ensembl" id="ENSSSCT00025009917.1">
    <property type="protein sequence ID" value="ENSSSCP00025003957.1"/>
    <property type="gene ID" value="ENSSSCG00025007450.1"/>
</dbReference>
<dbReference type="Ensembl" id="ENSSSCT00030043698.1">
    <property type="protein sequence ID" value="ENSSSCP00030019754.1"/>
    <property type="gene ID" value="ENSSSCG00030031546.1"/>
</dbReference>
<dbReference type="Ensembl" id="ENSSSCT00035087512.1">
    <property type="protein sequence ID" value="ENSSSCP00035036539.1"/>
    <property type="gene ID" value="ENSSSCG00035064989.1"/>
</dbReference>
<dbReference type="Ensembl" id="ENSSSCT00040021168.1">
    <property type="protein sequence ID" value="ENSSSCP00040008877.1"/>
    <property type="gene ID" value="ENSSSCG00040015722.1"/>
</dbReference>
<dbReference type="Ensembl" id="ENSSSCT00045054069.1">
    <property type="protein sequence ID" value="ENSSSCP00045037630.1"/>
    <property type="gene ID" value="ENSSSCG00045031688.1"/>
</dbReference>
<dbReference type="Ensembl" id="ENSSSCT00050053853.1">
    <property type="protein sequence ID" value="ENSSSCP00050022665.1"/>
    <property type="gene ID" value="ENSSSCG00050039885.1"/>
</dbReference>
<dbReference type="Ensembl" id="ENSSSCT00055046999.1">
    <property type="protein sequence ID" value="ENSSSCP00055037489.1"/>
    <property type="gene ID" value="ENSSSCG00055023873.1"/>
</dbReference>
<dbReference type="Ensembl" id="ENSSSCT00060005564.1">
    <property type="protein sequence ID" value="ENSSSCP00060001890.1"/>
    <property type="gene ID" value="ENSSSCG00060004478.1"/>
</dbReference>
<dbReference type="Ensembl" id="ENSSSCT00065024780.1">
    <property type="protein sequence ID" value="ENSSSCP00065010118.1"/>
    <property type="gene ID" value="ENSSSCG00065018652.1"/>
</dbReference>
<dbReference type="Ensembl" id="ENSSSCT00070030198.1">
    <property type="protein sequence ID" value="ENSSSCP00070025188.1"/>
    <property type="gene ID" value="ENSSSCG00070015373.1"/>
</dbReference>
<dbReference type="Ensembl" id="ENSSSCT00085003530">
    <property type="protein sequence ID" value="ENSSSCP00085002587"/>
    <property type="gene ID" value="ENSSSCG00085002113"/>
</dbReference>
<dbReference type="Ensembl" id="ENSSSCT00090002268">
    <property type="protein sequence ID" value="ENSSSCP00090001302"/>
    <property type="gene ID" value="ENSSSCG00090001429"/>
</dbReference>
<dbReference type="Ensembl" id="ENSSSCT00105018395">
    <property type="protein sequence ID" value="ENSSSCP00105013111"/>
    <property type="gene ID" value="ENSSSCG00105009272"/>
</dbReference>
<dbReference type="Ensembl" id="ENSSSCT00110073795">
    <property type="protein sequence ID" value="ENSSSCP00110052136"/>
    <property type="gene ID" value="ENSSSCG00110038650"/>
</dbReference>
<dbReference type="Ensembl" id="ENSSSCT00115026232">
    <property type="protein sequence ID" value="ENSSSCP00115024850"/>
    <property type="gene ID" value="ENSSSCG00115015092"/>
</dbReference>
<dbReference type="Ensembl" id="ENSSSCT00130007238">
    <property type="protein sequence ID" value="ENSSSCP00130004843"/>
    <property type="gene ID" value="ENSSSCG00130003901"/>
</dbReference>
<dbReference type="GeneID" id="396835"/>
<dbReference type="KEGG" id="ssc:396835"/>
<dbReference type="CTD" id="22373"/>
<dbReference type="eggNOG" id="ENOG502RXHY">
    <property type="taxonomic scope" value="Eukaryota"/>
</dbReference>
<dbReference type="GeneTree" id="ENSGT00730000111762"/>
<dbReference type="HOGENOM" id="CLU_156961_0_0_1"/>
<dbReference type="InParanoid" id="O46655"/>
<dbReference type="OMA" id="PQGTKCC"/>
<dbReference type="OrthoDB" id="6060011at2759"/>
<dbReference type="TreeFam" id="TF339378"/>
<dbReference type="Proteomes" id="UP000008227">
    <property type="component" value="Chromosome 18"/>
</dbReference>
<dbReference type="Proteomes" id="UP000314985">
    <property type="component" value="Chromosome 18"/>
</dbReference>
<dbReference type="Proteomes" id="UP000694570">
    <property type="component" value="Unplaced"/>
</dbReference>
<dbReference type="Proteomes" id="UP000694571">
    <property type="component" value="Unplaced"/>
</dbReference>
<dbReference type="Proteomes" id="UP000694720">
    <property type="component" value="Unplaced"/>
</dbReference>
<dbReference type="Proteomes" id="UP000694722">
    <property type="component" value="Unplaced"/>
</dbReference>
<dbReference type="Proteomes" id="UP000694723">
    <property type="component" value="Unplaced"/>
</dbReference>
<dbReference type="Proteomes" id="UP000694724">
    <property type="component" value="Unplaced"/>
</dbReference>
<dbReference type="Proteomes" id="UP000694725">
    <property type="component" value="Unplaced"/>
</dbReference>
<dbReference type="Proteomes" id="UP000694726">
    <property type="component" value="Unplaced"/>
</dbReference>
<dbReference type="Proteomes" id="UP000694727">
    <property type="component" value="Unplaced"/>
</dbReference>
<dbReference type="Proteomes" id="UP000694728">
    <property type="component" value="Unplaced"/>
</dbReference>
<dbReference type="Bgee" id="ENSSSCG00000016731">
    <property type="expression patterns" value="Expressed in epididymis and 15 other cell types or tissues"/>
</dbReference>
<dbReference type="GO" id="GO:0005615">
    <property type="term" value="C:extracellular space"/>
    <property type="evidence" value="ECO:0000318"/>
    <property type="project" value="GO_Central"/>
</dbReference>
<dbReference type="GO" id="GO:0004867">
    <property type="term" value="F:serine-type endopeptidase inhibitor activity"/>
    <property type="evidence" value="ECO:0000318"/>
    <property type="project" value="GO_Central"/>
</dbReference>
<dbReference type="GO" id="GO:0019731">
    <property type="term" value="P:antibacterial humoral response"/>
    <property type="evidence" value="ECO:0000318"/>
    <property type="project" value="GO_Central"/>
</dbReference>
<dbReference type="GO" id="GO:0045087">
    <property type="term" value="P:innate immune response"/>
    <property type="evidence" value="ECO:0000318"/>
    <property type="project" value="GO_Central"/>
</dbReference>
<dbReference type="CDD" id="cd00199">
    <property type="entry name" value="WAP"/>
    <property type="match status" value="1"/>
</dbReference>
<dbReference type="Gene3D" id="4.10.75.10">
    <property type="entry name" value="Elafin-like"/>
    <property type="match status" value="2"/>
</dbReference>
<dbReference type="InterPro" id="IPR036645">
    <property type="entry name" value="Elafin-like_sf"/>
</dbReference>
<dbReference type="InterPro" id="IPR008197">
    <property type="entry name" value="WAP_dom"/>
</dbReference>
<dbReference type="InterPro" id="IPR050514">
    <property type="entry name" value="WAP_four-disulfide_core"/>
</dbReference>
<dbReference type="PANTHER" id="PTHR19441:SF30">
    <property type="entry name" value="ELAFIN"/>
    <property type="match status" value="1"/>
</dbReference>
<dbReference type="PANTHER" id="PTHR19441">
    <property type="entry name" value="WHEY ACDIC PROTEIN WAP"/>
    <property type="match status" value="1"/>
</dbReference>
<dbReference type="Pfam" id="PF00095">
    <property type="entry name" value="WAP"/>
    <property type="match status" value="2"/>
</dbReference>
<dbReference type="PRINTS" id="PR00003">
    <property type="entry name" value="4DISULPHCORE"/>
</dbReference>
<dbReference type="SMART" id="SM00217">
    <property type="entry name" value="WAP"/>
    <property type="match status" value="2"/>
</dbReference>
<dbReference type="SUPFAM" id="SSF57256">
    <property type="entry name" value="Elafin-like"/>
    <property type="match status" value="1"/>
</dbReference>
<dbReference type="PROSITE" id="PS51390">
    <property type="entry name" value="WAP"/>
    <property type="match status" value="2"/>
</dbReference>
<protein>
    <recommendedName>
        <fullName>Whey acidic protein</fullName>
        <shortName>WAP</shortName>
    </recommendedName>
</protein>
<feature type="signal peptide" evidence="3">
    <location>
        <begin position="1"/>
        <end position="19"/>
    </location>
</feature>
<feature type="chain" id="PRO_0000041351" description="Whey acidic protein">
    <location>
        <begin position="20"/>
        <end position="132"/>
    </location>
</feature>
<feature type="domain" description="WAP 1" evidence="1">
    <location>
        <begin position="23"/>
        <end position="73"/>
    </location>
</feature>
<feature type="domain" description="WAP 2" evidence="1">
    <location>
        <begin position="76"/>
        <end position="126"/>
    </location>
</feature>
<feature type="disulfide bond" evidence="1 2">
    <location>
        <begin position="32"/>
        <end position="60"/>
    </location>
</feature>
<feature type="disulfide bond" evidence="1 2">
    <location>
        <begin position="43"/>
        <end position="65"/>
    </location>
</feature>
<feature type="disulfide bond" evidence="1 2">
    <location>
        <begin position="47"/>
        <end position="59"/>
    </location>
</feature>
<feature type="disulfide bond" evidence="1 2">
    <location>
        <begin position="53"/>
        <end position="69"/>
    </location>
</feature>
<feature type="disulfide bond" evidence="1 2">
    <location>
        <begin position="83"/>
        <end position="114"/>
    </location>
</feature>
<feature type="disulfide bond" evidence="1 2">
    <location>
        <begin position="95"/>
        <end position="118"/>
    </location>
</feature>
<feature type="disulfide bond" evidence="1 2">
    <location>
        <begin position="101"/>
        <end position="113"/>
    </location>
</feature>
<feature type="disulfide bond" evidence="1 2">
    <location>
        <begin position="107"/>
        <end position="122"/>
    </location>
</feature>
<feature type="sequence conflict" description="In Ref. 1; AA sequence." evidence="4" ref="1">
    <location>
        <begin position="39"/>
        <end position="40"/>
    </location>
</feature>
<accession>O46655</accession>
<accession>O97559</accession>